<name>ZSWM4_HUMAN</name>
<accession>Q9H7M6</accession>
<proteinExistence type="evidence at protein level"/>
<sequence length="989" mass="110138">MEPPAAKRSRGCPAGPEERDAGAGAARGRGRPEALLDLSAKRVAESWAFEQVEERFSRVPEPVQKRIVFWSFPRSEREICMYSSLGYPPPEGEHDARVPFTRGLHLLQSGAVDRVLQVGFHLSGNIREPGSPGEPERLYHVSISFDRCKITSVSCGCDNRDLFYCAHVVALSLYRIRHAHQVELRLPISETLSQMNRDQLQKFVQYLISAHHTEVLPTAQRLADEILLLGSEINLVNGAPDPTAGAGIEDANCWHLDEEQIQEQVKQLLSNGGYYGASQQLRSMFSKVREMLRMRDSNGARMLILMTEQFLQDTRLALWRQQGAGMTDKCRQLWDELGALWVCVVLSPHCKPEERAGWLQLLSRWDKLDVCPLEEGNYSFDGPSLQPTMAPAPELLQKGSTCITNTEGWVGHPLDPIGCLCRALLEACRLEEETLTLYPDSGPEKRKVAYQHVPVPGSPGESYLVLALEVALLGLGQQRALPEGLYAQDKVVRNEEQLLALLEEVELDERLVQVLRKQAGLLLEGGPFSGFGEVLFRESVPMHTCARYLFTALLPHDPDLAYRLALRAMRLPILETAFPAGEPHPSPLDSIMSNRFPRWFILGHLETRQCELASTMLTAAKGDPKWLHTVLGSIQQNIHSPALLFKLAQDACKTATPVSAPPDTTLLGIALELGLQVMRMTLNVMTWRRREMVRWLVSCATEIGPQALMNIMQNWYSLFTPVEAATIVAVTGTTHATLLRLQLDTSRREELWACARTLALQCAMKDPQNCALPALTLCEKNHSAFEAAYQIVLDAAAGGLGHAHLFTVARYMEHRGLPLRAYKLATLALAQLSIAFNQDSHPAVNDVLWACSLSHSLGRHELSAIVPLIIRSIHCAPMLSDILRRWTLSAPGLGPLGARRAAKPLGADRAPLCQLLDAAVTAYITTSHSRLTHISPRHYGDFIEFLGKARETFLLAPDGHLQFSQFLENLKQTYKGKKKLMLLVRERFG</sequence>
<dbReference type="EMBL" id="AK024452">
    <property type="protein sequence ID" value="BAB15742.1"/>
    <property type="status" value="ALT_INIT"/>
    <property type="molecule type" value="mRNA"/>
</dbReference>
<dbReference type="EMBL" id="AC020916">
    <property type="status" value="NOT_ANNOTATED_CDS"/>
    <property type="molecule type" value="Genomic_DNA"/>
</dbReference>
<dbReference type="CCDS" id="CCDS32924.1"/>
<dbReference type="RefSeq" id="NP_075560.2">
    <property type="nucleotide sequence ID" value="NM_023072.3"/>
</dbReference>
<dbReference type="BioGRID" id="122412">
    <property type="interactions" value="3"/>
</dbReference>
<dbReference type="FunCoup" id="Q9H7M6">
    <property type="interactions" value="34"/>
</dbReference>
<dbReference type="STRING" id="9606.ENSP00000254323"/>
<dbReference type="GlyGen" id="Q9H7M6">
    <property type="glycosylation" value="1 site"/>
</dbReference>
<dbReference type="iPTMnet" id="Q9H7M6"/>
<dbReference type="PhosphoSitePlus" id="Q9H7M6"/>
<dbReference type="BioMuta" id="ZSWIM4"/>
<dbReference type="DMDM" id="296453063"/>
<dbReference type="MassIVE" id="Q9H7M6"/>
<dbReference type="PaxDb" id="9606-ENSP00000254323"/>
<dbReference type="PeptideAtlas" id="Q9H7M6"/>
<dbReference type="Antibodypedia" id="50167">
    <property type="antibodies" value="8 antibodies from 7 providers"/>
</dbReference>
<dbReference type="DNASU" id="65249"/>
<dbReference type="Ensembl" id="ENST00000254323.6">
    <property type="protein sequence ID" value="ENSP00000254323.2"/>
    <property type="gene ID" value="ENSG00000132003.10"/>
</dbReference>
<dbReference type="Ensembl" id="ENST00000672332.1">
    <property type="protein sequence ID" value="ENSP00000499807.1"/>
    <property type="gene ID" value="ENSG00000288360.1"/>
</dbReference>
<dbReference type="GeneID" id="65249"/>
<dbReference type="KEGG" id="hsa:65249"/>
<dbReference type="UCSC" id="uc002mxh.1">
    <property type="organism name" value="human"/>
</dbReference>
<dbReference type="AGR" id="HGNC:25704"/>
<dbReference type="CTD" id="65249"/>
<dbReference type="DisGeNET" id="65249"/>
<dbReference type="GeneCards" id="ZSWIM4"/>
<dbReference type="HGNC" id="HGNC:25704">
    <property type="gene designation" value="ZSWIM4"/>
</dbReference>
<dbReference type="HPA" id="ENSG00000132003">
    <property type="expression patterns" value="Low tissue specificity"/>
</dbReference>
<dbReference type="MIM" id="620539">
    <property type="type" value="gene"/>
</dbReference>
<dbReference type="neXtProt" id="NX_Q9H7M6"/>
<dbReference type="OpenTargets" id="ENSG00000132003"/>
<dbReference type="PharmGKB" id="PA134975055"/>
<dbReference type="VEuPathDB" id="HostDB:ENSG00000132003"/>
<dbReference type="eggNOG" id="KOG3615">
    <property type="taxonomic scope" value="Eukaryota"/>
</dbReference>
<dbReference type="GeneTree" id="ENSGT00940000162102"/>
<dbReference type="HOGENOM" id="CLU_005301_1_0_1"/>
<dbReference type="InParanoid" id="Q9H7M6"/>
<dbReference type="OMA" id="ILMTQQF"/>
<dbReference type="OrthoDB" id="10013584at2759"/>
<dbReference type="PAN-GO" id="Q9H7M6">
    <property type="GO annotations" value="1 GO annotation based on evolutionary models"/>
</dbReference>
<dbReference type="PhylomeDB" id="Q9H7M6"/>
<dbReference type="TreeFam" id="TF324881"/>
<dbReference type="PathwayCommons" id="Q9H7M6"/>
<dbReference type="SignaLink" id="Q9H7M6"/>
<dbReference type="BioGRID-ORCS" id="65249">
    <property type="hits" value="11 hits in 1158 CRISPR screens"/>
</dbReference>
<dbReference type="ChiTaRS" id="ZSWIM4">
    <property type="organism name" value="human"/>
</dbReference>
<dbReference type="GenomeRNAi" id="65249"/>
<dbReference type="Pharos" id="Q9H7M6">
    <property type="development level" value="Tdark"/>
</dbReference>
<dbReference type="PRO" id="PR:Q9H7M6"/>
<dbReference type="Proteomes" id="UP000005640">
    <property type="component" value="Chromosome 19"/>
</dbReference>
<dbReference type="RNAct" id="Q9H7M6">
    <property type="molecule type" value="protein"/>
</dbReference>
<dbReference type="Bgee" id="ENSG00000132003">
    <property type="expression patterns" value="Expressed in lower esophagus mucosa and 95 other cell types or tissues"/>
</dbReference>
<dbReference type="ExpressionAtlas" id="Q9H7M6">
    <property type="expression patterns" value="baseline and differential"/>
</dbReference>
<dbReference type="GO" id="GO:0031462">
    <property type="term" value="C:Cul2-RING ubiquitin ligase complex"/>
    <property type="evidence" value="ECO:0000318"/>
    <property type="project" value="GO_Central"/>
</dbReference>
<dbReference type="GO" id="GO:0008270">
    <property type="term" value="F:zinc ion binding"/>
    <property type="evidence" value="ECO:0007669"/>
    <property type="project" value="UniProtKB-KW"/>
</dbReference>
<dbReference type="InterPro" id="IPR007527">
    <property type="entry name" value="Znf_SWIM"/>
</dbReference>
<dbReference type="InterPro" id="IPR048370">
    <property type="entry name" value="ZSWIM4-8_C"/>
</dbReference>
<dbReference type="PANTHER" id="PTHR22619">
    <property type="entry name" value="ZINC FINGER SWIM DOMAIN CONTAINING PROTEIN 4, 5, 6"/>
    <property type="match status" value="1"/>
</dbReference>
<dbReference type="PANTHER" id="PTHR22619:SF4">
    <property type="entry name" value="ZINC FINGER SWIM DOMAIN-CONTAINING PROTEIN 4"/>
    <property type="match status" value="1"/>
</dbReference>
<dbReference type="Pfam" id="PF21055">
    <property type="entry name" value="ZSWIM4-8_C"/>
    <property type="match status" value="1"/>
</dbReference>
<dbReference type="PROSITE" id="PS50966">
    <property type="entry name" value="ZF_SWIM"/>
    <property type="match status" value="1"/>
</dbReference>
<keyword id="KW-0479">Metal-binding</keyword>
<keyword id="KW-1267">Proteomics identification</keyword>
<keyword id="KW-1185">Reference proteome</keyword>
<keyword id="KW-0862">Zinc</keyword>
<keyword id="KW-0863">Zinc-finger</keyword>
<feature type="chain" id="PRO_0000223101" description="Zinc finger SWIM domain-containing protein 4">
    <location>
        <begin position="1"/>
        <end position="989"/>
    </location>
</feature>
<feature type="zinc finger region" description="SWIM-type" evidence="1">
    <location>
        <begin position="139"/>
        <end position="176"/>
    </location>
</feature>
<feature type="region of interest" description="Disordered" evidence="2">
    <location>
        <begin position="1"/>
        <end position="32"/>
    </location>
</feature>
<feature type="sequence conflict" description="In Ref. 1; BAB15742." evidence="3" ref="1">
    <original>T</original>
    <variation>M</variation>
    <location>
        <position position="629"/>
    </location>
</feature>
<organism>
    <name type="scientific">Homo sapiens</name>
    <name type="common">Human</name>
    <dbReference type="NCBI Taxonomy" id="9606"/>
    <lineage>
        <taxon>Eukaryota</taxon>
        <taxon>Metazoa</taxon>
        <taxon>Chordata</taxon>
        <taxon>Craniata</taxon>
        <taxon>Vertebrata</taxon>
        <taxon>Euteleostomi</taxon>
        <taxon>Mammalia</taxon>
        <taxon>Eutheria</taxon>
        <taxon>Euarchontoglires</taxon>
        <taxon>Primates</taxon>
        <taxon>Haplorrhini</taxon>
        <taxon>Catarrhini</taxon>
        <taxon>Hominidae</taxon>
        <taxon>Homo</taxon>
    </lineage>
</organism>
<protein>
    <recommendedName>
        <fullName>Zinc finger SWIM domain-containing protein 4</fullName>
    </recommendedName>
</protein>
<reference key="1">
    <citation type="journal article" date="2000" name="DNA Res.">
        <title>Characterization of long cDNA clones from human adult spleen.</title>
        <authorList>
            <person name="Hattori A."/>
            <person name="Okumura K."/>
            <person name="Nagase T."/>
            <person name="Kikuno R."/>
            <person name="Hirosawa M."/>
            <person name="Ohara O."/>
        </authorList>
    </citation>
    <scope>NUCLEOTIDE SEQUENCE [LARGE SCALE MRNA]</scope>
    <source>
        <tissue>Spleen</tissue>
    </source>
</reference>
<reference key="2">
    <citation type="journal article" date="2004" name="Nature">
        <title>The DNA sequence and biology of human chromosome 19.</title>
        <authorList>
            <person name="Grimwood J."/>
            <person name="Gordon L.A."/>
            <person name="Olsen A.S."/>
            <person name="Terry A."/>
            <person name="Schmutz J."/>
            <person name="Lamerdin J.E."/>
            <person name="Hellsten U."/>
            <person name="Goodstein D."/>
            <person name="Couronne O."/>
            <person name="Tran-Gyamfi M."/>
            <person name="Aerts A."/>
            <person name="Altherr M."/>
            <person name="Ashworth L."/>
            <person name="Bajorek E."/>
            <person name="Black S."/>
            <person name="Branscomb E."/>
            <person name="Caenepeel S."/>
            <person name="Carrano A.V."/>
            <person name="Caoile C."/>
            <person name="Chan Y.M."/>
            <person name="Christensen M."/>
            <person name="Cleland C.A."/>
            <person name="Copeland A."/>
            <person name="Dalin E."/>
            <person name="Dehal P."/>
            <person name="Denys M."/>
            <person name="Detter J.C."/>
            <person name="Escobar J."/>
            <person name="Flowers D."/>
            <person name="Fotopulos D."/>
            <person name="Garcia C."/>
            <person name="Georgescu A.M."/>
            <person name="Glavina T."/>
            <person name="Gomez M."/>
            <person name="Gonzales E."/>
            <person name="Groza M."/>
            <person name="Hammon N."/>
            <person name="Hawkins T."/>
            <person name="Haydu L."/>
            <person name="Ho I."/>
            <person name="Huang W."/>
            <person name="Israni S."/>
            <person name="Jett J."/>
            <person name="Kadner K."/>
            <person name="Kimball H."/>
            <person name="Kobayashi A."/>
            <person name="Larionov V."/>
            <person name="Leem S.-H."/>
            <person name="Lopez F."/>
            <person name="Lou Y."/>
            <person name="Lowry S."/>
            <person name="Malfatti S."/>
            <person name="Martinez D."/>
            <person name="McCready P.M."/>
            <person name="Medina C."/>
            <person name="Morgan J."/>
            <person name="Nelson K."/>
            <person name="Nolan M."/>
            <person name="Ovcharenko I."/>
            <person name="Pitluck S."/>
            <person name="Pollard M."/>
            <person name="Popkie A.P."/>
            <person name="Predki P."/>
            <person name="Quan G."/>
            <person name="Ramirez L."/>
            <person name="Rash S."/>
            <person name="Retterer J."/>
            <person name="Rodriguez A."/>
            <person name="Rogers S."/>
            <person name="Salamov A."/>
            <person name="Salazar A."/>
            <person name="She X."/>
            <person name="Smith D."/>
            <person name="Slezak T."/>
            <person name="Solovyev V."/>
            <person name="Thayer N."/>
            <person name="Tice H."/>
            <person name="Tsai M."/>
            <person name="Ustaszewska A."/>
            <person name="Vo N."/>
            <person name="Wagner M."/>
            <person name="Wheeler J."/>
            <person name="Wu K."/>
            <person name="Xie G."/>
            <person name="Yang J."/>
            <person name="Dubchak I."/>
            <person name="Furey T.S."/>
            <person name="DeJong P."/>
            <person name="Dickson M."/>
            <person name="Gordon D."/>
            <person name="Eichler E.E."/>
            <person name="Pennacchio L.A."/>
            <person name="Richardson P."/>
            <person name="Stubbs L."/>
            <person name="Rokhsar D.S."/>
            <person name="Myers R.M."/>
            <person name="Rubin E.M."/>
            <person name="Lucas S.M."/>
        </authorList>
    </citation>
    <scope>NUCLEOTIDE SEQUENCE [LARGE SCALE GENOMIC DNA]</scope>
</reference>
<comment type="sequence caution" evidence="3">
    <conflict type="erroneous initiation">
        <sequence resource="EMBL-CDS" id="BAB15742"/>
    </conflict>
    <text>Extended N-terminus.</text>
</comment>
<evidence type="ECO:0000255" key="1">
    <source>
        <dbReference type="PROSITE-ProRule" id="PRU00325"/>
    </source>
</evidence>
<evidence type="ECO:0000256" key="2">
    <source>
        <dbReference type="SAM" id="MobiDB-lite"/>
    </source>
</evidence>
<evidence type="ECO:0000305" key="3"/>
<gene>
    <name type="primary">ZSWIM4</name>
</gene>